<comment type="function">
    <text evidence="1">Involved in mRNA degradation. Catalyzes the phosphorolysis of single-stranded polyribonucleotides processively in the 3'- to 5'-direction.</text>
</comment>
<comment type="catalytic activity">
    <reaction evidence="1">
        <text>RNA(n+1) + phosphate = RNA(n) + a ribonucleoside 5'-diphosphate</text>
        <dbReference type="Rhea" id="RHEA:22096"/>
        <dbReference type="Rhea" id="RHEA-COMP:14527"/>
        <dbReference type="Rhea" id="RHEA-COMP:17342"/>
        <dbReference type="ChEBI" id="CHEBI:43474"/>
        <dbReference type="ChEBI" id="CHEBI:57930"/>
        <dbReference type="ChEBI" id="CHEBI:140395"/>
        <dbReference type="EC" id="2.7.7.8"/>
    </reaction>
</comment>
<comment type="cofactor">
    <cofactor evidence="1">
        <name>Mg(2+)</name>
        <dbReference type="ChEBI" id="CHEBI:18420"/>
    </cofactor>
</comment>
<comment type="subcellular location">
    <subcellularLocation>
        <location evidence="1">Cytoplasm</location>
    </subcellularLocation>
</comment>
<comment type="similarity">
    <text evidence="1">Belongs to the polyribonucleotide nucleotidyltransferase family.</text>
</comment>
<organism>
    <name type="scientific">Allorhizobium ampelinum (strain ATCC BAA-846 / DSM 112012 / S4)</name>
    <name type="common">Agrobacterium vitis (strain S4)</name>
    <dbReference type="NCBI Taxonomy" id="311402"/>
    <lineage>
        <taxon>Bacteria</taxon>
        <taxon>Pseudomonadati</taxon>
        <taxon>Pseudomonadota</taxon>
        <taxon>Alphaproteobacteria</taxon>
        <taxon>Hyphomicrobiales</taxon>
        <taxon>Rhizobiaceae</taxon>
        <taxon>Rhizobium/Agrobacterium group</taxon>
        <taxon>Allorhizobium</taxon>
        <taxon>Allorhizobium ampelinum</taxon>
    </lineage>
</organism>
<reference key="1">
    <citation type="journal article" date="2009" name="J. Bacteriol.">
        <title>Genome sequences of three Agrobacterium biovars help elucidate the evolution of multichromosome genomes in bacteria.</title>
        <authorList>
            <person name="Slater S.C."/>
            <person name="Goldman B.S."/>
            <person name="Goodner B."/>
            <person name="Setubal J.C."/>
            <person name="Farrand S.K."/>
            <person name="Nester E.W."/>
            <person name="Burr T.J."/>
            <person name="Banta L."/>
            <person name="Dickerman A.W."/>
            <person name="Paulsen I."/>
            <person name="Otten L."/>
            <person name="Suen G."/>
            <person name="Welch R."/>
            <person name="Almeida N.F."/>
            <person name="Arnold F."/>
            <person name="Burton O.T."/>
            <person name="Du Z."/>
            <person name="Ewing A."/>
            <person name="Godsy E."/>
            <person name="Heisel S."/>
            <person name="Houmiel K.L."/>
            <person name="Jhaveri J."/>
            <person name="Lu J."/>
            <person name="Miller N.M."/>
            <person name="Norton S."/>
            <person name="Chen Q."/>
            <person name="Phoolcharoen W."/>
            <person name="Ohlin V."/>
            <person name="Ondrusek D."/>
            <person name="Pride N."/>
            <person name="Stricklin S.L."/>
            <person name="Sun J."/>
            <person name="Wheeler C."/>
            <person name="Wilson L."/>
            <person name="Zhu H."/>
            <person name="Wood D.W."/>
        </authorList>
    </citation>
    <scope>NUCLEOTIDE SEQUENCE [LARGE SCALE GENOMIC DNA]</scope>
    <source>
        <strain>ATCC BAA-846 / DSM 112012 / S4</strain>
    </source>
</reference>
<evidence type="ECO:0000255" key="1">
    <source>
        <dbReference type="HAMAP-Rule" id="MF_01595"/>
    </source>
</evidence>
<keyword id="KW-0963">Cytoplasm</keyword>
<keyword id="KW-0460">Magnesium</keyword>
<keyword id="KW-0479">Metal-binding</keyword>
<keyword id="KW-0548">Nucleotidyltransferase</keyword>
<keyword id="KW-1185">Reference proteome</keyword>
<keyword id="KW-0694">RNA-binding</keyword>
<keyword id="KW-0808">Transferase</keyword>
<dbReference type="EC" id="2.7.7.8" evidence="1"/>
<dbReference type="EMBL" id="CP000633">
    <property type="protein sequence ID" value="ACM35106.1"/>
    <property type="molecule type" value="Genomic_DNA"/>
</dbReference>
<dbReference type="RefSeq" id="WP_012654636.1">
    <property type="nucleotide sequence ID" value="NC_011989.1"/>
</dbReference>
<dbReference type="SMR" id="B9JYL0"/>
<dbReference type="STRING" id="311402.Avi_0175"/>
<dbReference type="KEGG" id="avi:Avi_0175"/>
<dbReference type="eggNOG" id="COG1185">
    <property type="taxonomic scope" value="Bacteria"/>
</dbReference>
<dbReference type="HOGENOM" id="CLU_004217_2_2_5"/>
<dbReference type="Proteomes" id="UP000001596">
    <property type="component" value="Chromosome 1"/>
</dbReference>
<dbReference type="GO" id="GO:0005829">
    <property type="term" value="C:cytosol"/>
    <property type="evidence" value="ECO:0007669"/>
    <property type="project" value="TreeGrafter"/>
</dbReference>
<dbReference type="GO" id="GO:0000175">
    <property type="term" value="F:3'-5'-RNA exonuclease activity"/>
    <property type="evidence" value="ECO:0007669"/>
    <property type="project" value="TreeGrafter"/>
</dbReference>
<dbReference type="GO" id="GO:0000287">
    <property type="term" value="F:magnesium ion binding"/>
    <property type="evidence" value="ECO:0007669"/>
    <property type="project" value="UniProtKB-UniRule"/>
</dbReference>
<dbReference type="GO" id="GO:0004654">
    <property type="term" value="F:polyribonucleotide nucleotidyltransferase activity"/>
    <property type="evidence" value="ECO:0007669"/>
    <property type="project" value="UniProtKB-UniRule"/>
</dbReference>
<dbReference type="GO" id="GO:0003723">
    <property type="term" value="F:RNA binding"/>
    <property type="evidence" value="ECO:0007669"/>
    <property type="project" value="UniProtKB-UniRule"/>
</dbReference>
<dbReference type="GO" id="GO:0006402">
    <property type="term" value="P:mRNA catabolic process"/>
    <property type="evidence" value="ECO:0007669"/>
    <property type="project" value="UniProtKB-UniRule"/>
</dbReference>
<dbReference type="GO" id="GO:0006396">
    <property type="term" value="P:RNA processing"/>
    <property type="evidence" value="ECO:0007669"/>
    <property type="project" value="InterPro"/>
</dbReference>
<dbReference type="CDD" id="cd02393">
    <property type="entry name" value="KH-I_PNPase"/>
    <property type="match status" value="1"/>
</dbReference>
<dbReference type="CDD" id="cd11363">
    <property type="entry name" value="RNase_PH_PNPase_1"/>
    <property type="match status" value="1"/>
</dbReference>
<dbReference type="CDD" id="cd11364">
    <property type="entry name" value="RNase_PH_PNPase_2"/>
    <property type="match status" value="1"/>
</dbReference>
<dbReference type="CDD" id="cd04472">
    <property type="entry name" value="S1_PNPase"/>
    <property type="match status" value="1"/>
</dbReference>
<dbReference type="FunFam" id="2.40.50.140:FF:000107">
    <property type="entry name" value="Polyribonucleotide nucleotidyltransferase"/>
    <property type="match status" value="1"/>
</dbReference>
<dbReference type="FunFam" id="3.30.1370.10:FF:000001">
    <property type="entry name" value="Polyribonucleotide nucleotidyltransferase"/>
    <property type="match status" value="1"/>
</dbReference>
<dbReference type="FunFam" id="3.30.230.70:FF:000001">
    <property type="entry name" value="Polyribonucleotide nucleotidyltransferase"/>
    <property type="match status" value="1"/>
</dbReference>
<dbReference type="FunFam" id="3.30.230.70:FF:000002">
    <property type="entry name" value="Polyribonucleotide nucleotidyltransferase"/>
    <property type="match status" value="1"/>
</dbReference>
<dbReference type="Gene3D" id="3.30.230.70">
    <property type="entry name" value="GHMP Kinase, N-terminal domain"/>
    <property type="match status" value="2"/>
</dbReference>
<dbReference type="Gene3D" id="3.30.1370.10">
    <property type="entry name" value="K Homology domain, type 1"/>
    <property type="match status" value="1"/>
</dbReference>
<dbReference type="Gene3D" id="2.40.50.140">
    <property type="entry name" value="Nucleic acid-binding proteins"/>
    <property type="match status" value="1"/>
</dbReference>
<dbReference type="HAMAP" id="MF_01595">
    <property type="entry name" value="PNPase"/>
    <property type="match status" value="1"/>
</dbReference>
<dbReference type="InterPro" id="IPR001247">
    <property type="entry name" value="ExoRNase_PH_dom1"/>
</dbReference>
<dbReference type="InterPro" id="IPR015847">
    <property type="entry name" value="ExoRNase_PH_dom2"/>
</dbReference>
<dbReference type="InterPro" id="IPR036345">
    <property type="entry name" value="ExoRNase_PH_dom2_sf"/>
</dbReference>
<dbReference type="InterPro" id="IPR004087">
    <property type="entry name" value="KH_dom"/>
</dbReference>
<dbReference type="InterPro" id="IPR004088">
    <property type="entry name" value="KH_dom_type_1"/>
</dbReference>
<dbReference type="InterPro" id="IPR036612">
    <property type="entry name" value="KH_dom_type_1_sf"/>
</dbReference>
<dbReference type="InterPro" id="IPR012340">
    <property type="entry name" value="NA-bd_OB-fold"/>
</dbReference>
<dbReference type="InterPro" id="IPR012162">
    <property type="entry name" value="PNPase"/>
</dbReference>
<dbReference type="InterPro" id="IPR027408">
    <property type="entry name" value="PNPase/RNase_PH_dom_sf"/>
</dbReference>
<dbReference type="InterPro" id="IPR015848">
    <property type="entry name" value="PNPase_PH_RNA-bd_bac/org-type"/>
</dbReference>
<dbReference type="InterPro" id="IPR020568">
    <property type="entry name" value="Ribosomal_Su5_D2-typ_SF"/>
</dbReference>
<dbReference type="InterPro" id="IPR003029">
    <property type="entry name" value="S1_domain"/>
</dbReference>
<dbReference type="NCBIfam" id="TIGR03591">
    <property type="entry name" value="polynuc_phos"/>
    <property type="match status" value="1"/>
</dbReference>
<dbReference type="NCBIfam" id="NF008805">
    <property type="entry name" value="PRK11824.1"/>
    <property type="match status" value="1"/>
</dbReference>
<dbReference type="PANTHER" id="PTHR11252">
    <property type="entry name" value="POLYRIBONUCLEOTIDE NUCLEOTIDYLTRANSFERASE"/>
    <property type="match status" value="1"/>
</dbReference>
<dbReference type="PANTHER" id="PTHR11252:SF0">
    <property type="entry name" value="POLYRIBONUCLEOTIDE NUCLEOTIDYLTRANSFERASE 1, MITOCHONDRIAL"/>
    <property type="match status" value="1"/>
</dbReference>
<dbReference type="Pfam" id="PF00013">
    <property type="entry name" value="KH_1"/>
    <property type="match status" value="1"/>
</dbReference>
<dbReference type="Pfam" id="PF03726">
    <property type="entry name" value="PNPase"/>
    <property type="match status" value="1"/>
</dbReference>
<dbReference type="Pfam" id="PF01138">
    <property type="entry name" value="RNase_PH"/>
    <property type="match status" value="2"/>
</dbReference>
<dbReference type="Pfam" id="PF03725">
    <property type="entry name" value="RNase_PH_C"/>
    <property type="match status" value="2"/>
</dbReference>
<dbReference type="Pfam" id="PF00575">
    <property type="entry name" value="S1"/>
    <property type="match status" value="1"/>
</dbReference>
<dbReference type="PIRSF" id="PIRSF005499">
    <property type="entry name" value="PNPase"/>
    <property type="match status" value="1"/>
</dbReference>
<dbReference type="SMART" id="SM00322">
    <property type="entry name" value="KH"/>
    <property type="match status" value="1"/>
</dbReference>
<dbReference type="SMART" id="SM00316">
    <property type="entry name" value="S1"/>
    <property type="match status" value="1"/>
</dbReference>
<dbReference type="SUPFAM" id="SSF54791">
    <property type="entry name" value="Eukaryotic type KH-domain (KH-domain type I)"/>
    <property type="match status" value="1"/>
</dbReference>
<dbReference type="SUPFAM" id="SSF50249">
    <property type="entry name" value="Nucleic acid-binding proteins"/>
    <property type="match status" value="1"/>
</dbReference>
<dbReference type="SUPFAM" id="SSF55666">
    <property type="entry name" value="Ribonuclease PH domain 2-like"/>
    <property type="match status" value="2"/>
</dbReference>
<dbReference type="SUPFAM" id="SSF54211">
    <property type="entry name" value="Ribosomal protein S5 domain 2-like"/>
    <property type="match status" value="2"/>
</dbReference>
<dbReference type="PROSITE" id="PS50084">
    <property type="entry name" value="KH_TYPE_1"/>
    <property type="match status" value="1"/>
</dbReference>
<dbReference type="PROSITE" id="PS50126">
    <property type="entry name" value="S1"/>
    <property type="match status" value="1"/>
</dbReference>
<sequence>MFNVHSVEIEWAGRPLKLETGKIARQADGAVLASYGETVVLATVVSAKSPKPGQDFFPLTVNYQEKTYAAGKIPGGYFKREGRPSEKETLVSRLIDRPIRPLFPEGYKNDTQVVVTVIQHDLENDPDVLSMVAASAALTLSGVPFMGPVGGARVGYINGEYVLNPHLDEMDESVLDLVVAGTQDAVLMVESEAKELNEDVMLGAVMFGHRGFQPVIDAIIKLAEVAAKEPREFEPEDHSALEAEMLSIAEAELRDAYKITQKADRYTAVDAVKAKVKAHFFPEGAEPKYTNEVIGAVFKHLQAKIVRWNILDTKSRIDGRDLETVRAIVSEVGILPRTHGSALFTRGETQAIVVATLGTGEDEQYVDSLTGMYKERFLLHYNFPPYSVGETGRMGSPGRREIGHGKLAWRAIRPMLPSPEQFPYTLRVVSEITESNGSSSMATVCGTSLALMDAGVPLAKPVAGIAMGLILEGERFAVLSDILGDEDHLGDMDFKVAGTEAGITSLQMDIKIAGITEEIMKVALAQAQNGRKHILGEMANAITEGRSQLGEFAPRIEVMTIPVDKIREVIGSGGKVIREIVEKTGAKINIEDDGTIKIASASGKEIEAARKWIHSIVAEPEIGVVYEGTVVKTADFGAFVNFFGSRDGLVHISQLAVDRVAKTQDVVKEGDKVWVKLMGFDERGKVRLSMKVVDQATGKEIVGDKKAEGDAAAE</sequence>
<accession>B9JYL0</accession>
<feature type="chain" id="PRO_1000185716" description="Polyribonucleotide nucleotidyltransferase">
    <location>
        <begin position="1"/>
        <end position="714"/>
    </location>
</feature>
<feature type="domain" description="KH" evidence="1">
    <location>
        <begin position="554"/>
        <end position="613"/>
    </location>
</feature>
<feature type="domain" description="S1 motif" evidence="1">
    <location>
        <begin position="623"/>
        <end position="691"/>
    </location>
</feature>
<feature type="binding site" evidence="1">
    <location>
        <position position="487"/>
    </location>
    <ligand>
        <name>Mg(2+)</name>
        <dbReference type="ChEBI" id="CHEBI:18420"/>
    </ligand>
</feature>
<feature type="binding site" evidence="1">
    <location>
        <position position="493"/>
    </location>
    <ligand>
        <name>Mg(2+)</name>
        <dbReference type="ChEBI" id="CHEBI:18420"/>
    </ligand>
</feature>
<name>PNP_ALLAM</name>
<protein>
    <recommendedName>
        <fullName evidence="1">Polyribonucleotide nucleotidyltransferase</fullName>
        <ecNumber evidence="1">2.7.7.8</ecNumber>
    </recommendedName>
    <alternativeName>
        <fullName evidence="1">Polynucleotide phosphorylase</fullName>
        <shortName evidence="1">PNPase</shortName>
    </alternativeName>
</protein>
<gene>
    <name evidence="1" type="primary">pnp</name>
    <name type="ordered locus">Avi_0175</name>
</gene>
<proteinExistence type="inferred from homology"/>